<sequence>MVMMLVMLSLHGTAARLNRREWDSVIQLPTEPVDDEVGTRWAVLVAGSNGYGNYRHQADVCHAYQLLIKGGVKEENIVVFMYDDIAYNAMNPRPGVIINHPQGPDVYAGVPKDYTGEDVTPENLYAVILGDKSKVKGGSGKVINSNPEDRIFIFYSDHGGPGVLGMPNAPFVYAMDFIDVLKKKHASGGYKEMVIYIEACESGSIFEGIMPKDLNIYVTTASNAQENSFGTYCPGMNPPPPEEYVTCLGDLYSVSWMEDSETHNLKRETVQQQYQSVRKRTSNSNSYRFGSHVMQYGDTNITAEKLYLYHGFDPATVNFPPHNGNLEAKMEVVNQRDAELLFMWQMYQRSNHQPEKKTHILEQITETVKHRNHLDGSVELIGVLLYGPGKSSSVLHSVRAPGLPLVDDWTCLKSMVRVFETHCGSLTQYGMKHMRAFGNVCNSGVSKASMEEACKAACGGYDAGLLYPSNTGYSA</sequence>
<comment type="function">
    <text evidence="5 6">Asparaginyl endopeptidase able to cleave almost all peptide bonds on the carboxyl side of Asn residues, except at the NH2 terminus or second position or with N-glycosylated Asn (PubMed:8429028). Responsible for the maturation (circular permutation) of concanavalin A from its precursor, by performing both cleavage and cleavage-coupled transpeptidation to form conA (PubMed:34235541, PubMed:8429028).</text>
</comment>
<comment type="catalytic activity">
    <reaction evidence="6">
        <text>Hydrolysis of proteins and small molecule substrates at -Asn-|-Xaa- bonds.</text>
        <dbReference type="EC" id="3.4.22.34"/>
    </reaction>
</comment>
<comment type="activity regulation">
    <text evidence="6">Repressed by various protease inhibitors including p-chloromercuribenzene sulfonic acid (PCMBS), N-ethylmaleimide, kininogen, elastatinal, cystatin EW and leupeptin.</text>
</comment>
<comment type="biophysicochemical properties">
    <kinetics>
        <KM evidence="6">23 uM for DNP-Pro-Glu-Ala-Asn-NH2 (at pH 5.0 and 35 degrees Celsius)</KM>
        <KM evidence="6">33 uM for DNP-Pro-Glu-Ala-Asn-NH2 (at pH 5.9 and 35 degrees Celsius)</KM>
    </kinetics>
    <phDependence>
        <text evidence="6">Optimum pH is 5.0-6.5.</text>
    </phDependence>
</comment>
<comment type="subunit">
    <text evidence="5">Homodimer.</text>
</comment>
<comment type="similarity">
    <text evidence="9">Belongs to the peptidase C13 family.</text>
</comment>
<keyword id="KW-0002">3D-structure</keyword>
<keyword id="KW-0903">Direct protein sequencing</keyword>
<keyword id="KW-1015">Disulfide bond</keyword>
<keyword id="KW-0325">Glycoprotein</keyword>
<keyword id="KW-0378">Hydrolase</keyword>
<keyword id="KW-0645">Protease</keyword>
<keyword id="KW-0732">Signal</keyword>
<keyword id="KW-0788">Thiol protease</keyword>
<keyword id="KW-0865">Zymogen</keyword>
<feature type="signal peptide" evidence="3">
    <location>
        <begin position="1"/>
        <end position="15"/>
    </location>
</feature>
<feature type="propeptide" id="PRO_0000026514" evidence="6">
    <location>
        <begin position="16"/>
        <end position="35"/>
    </location>
</feature>
<feature type="chain" id="PRO_0000026515" description="Legumain">
    <location>
        <begin position="36"/>
        <end position="475"/>
    </location>
</feature>
<feature type="active site" evidence="1">
    <location>
        <position position="158"/>
    </location>
</feature>
<feature type="active site" description="Nucleophile" evidence="1">
    <location>
        <position position="200"/>
    </location>
</feature>
<feature type="site" description="Required for post-translational maturation and enzyme activity" evidence="2">
    <location>
        <position position="247"/>
    </location>
</feature>
<feature type="glycosylation site" description="N-linked (GlcNAc...) asparagine" evidence="4">
    <location>
        <position position="300"/>
    </location>
</feature>
<feature type="disulfide bond" evidence="5 10">
    <location>
        <begin position="233"/>
        <end position="247"/>
    </location>
</feature>
<feature type="disulfide bond" evidence="5 10">
    <location>
        <begin position="411"/>
        <end position="441"/>
    </location>
</feature>
<feature type="disulfide bond" evidence="5 10">
    <location>
        <begin position="423"/>
        <end position="458"/>
    </location>
</feature>
<feature type="strand" evidence="11">
    <location>
        <begin position="40"/>
        <end position="46"/>
    </location>
</feature>
<feature type="helix" evidence="11">
    <location>
        <begin position="51"/>
        <end position="53"/>
    </location>
</feature>
<feature type="helix" evidence="11">
    <location>
        <begin position="54"/>
        <end position="69"/>
    </location>
</feature>
<feature type="turn" evidence="11">
    <location>
        <begin position="74"/>
        <end position="76"/>
    </location>
</feature>
<feature type="strand" evidence="11">
    <location>
        <begin position="77"/>
        <end position="80"/>
    </location>
</feature>
<feature type="strand" evidence="11">
    <location>
        <begin position="99"/>
        <end position="102"/>
    </location>
</feature>
<feature type="helix" evidence="11">
    <location>
        <begin position="116"/>
        <end position="118"/>
    </location>
</feature>
<feature type="helix" evidence="11">
    <location>
        <begin position="121"/>
        <end position="129"/>
    </location>
</feature>
<feature type="turn" evidence="11">
    <location>
        <begin position="132"/>
        <end position="134"/>
    </location>
</feature>
<feature type="strand" evidence="11">
    <location>
        <begin position="150"/>
        <end position="156"/>
    </location>
</feature>
<feature type="strand" evidence="11">
    <location>
        <begin position="167"/>
        <end position="170"/>
    </location>
</feature>
<feature type="helix" evidence="11">
    <location>
        <begin position="174"/>
        <end position="186"/>
    </location>
</feature>
<feature type="strand" evidence="11">
    <location>
        <begin position="193"/>
        <end position="197"/>
    </location>
</feature>
<feature type="helix" evidence="11">
    <location>
        <begin position="202"/>
        <end position="205"/>
    </location>
</feature>
<feature type="turn" evidence="11">
    <location>
        <begin position="206"/>
        <end position="209"/>
    </location>
</feature>
<feature type="strand" evidence="11">
    <location>
        <begin position="212"/>
        <end position="222"/>
    </location>
</feature>
<feature type="strand" evidence="11">
    <location>
        <begin position="224"/>
        <end position="226"/>
    </location>
</feature>
<feature type="strand" evidence="11">
    <location>
        <begin position="229"/>
        <end position="232"/>
    </location>
</feature>
<feature type="strand" evidence="11">
    <location>
        <begin position="236"/>
        <end position="238"/>
    </location>
</feature>
<feature type="helix" evidence="11">
    <location>
        <begin position="251"/>
        <end position="261"/>
    </location>
</feature>
<feature type="turn" evidence="11">
    <location>
        <begin position="265"/>
        <end position="267"/>
    </location>
</feature>
<feature type="helix" evidence="11">
    <location>
        <begin position="270"/>
        <end position="282"/>
    </location>
</feature>
<feature type="turn" evidence="11">
    <location>
        <begin position="286"/>
        <end position="289"/>
    </location>
</feature>
<feature type="strand" evidence="11">
    <location>
        <begin position="294"/>
        <end position="297"/>
    </location>
</feature>
<feature type="helix" evidence="11">
    <location>
        <begin position="301"/>
        <end position="303"/>
    </location>
</feature>
<feature type="helix" evidence="11">
    <location>
        <begin position="307"/>
        <end position="310"/>
    </location>
</feature>
<feature type="strand" evidence="11">
    <location>
        <begin position="317"/>
        <end position="319"/>
    </location>
</feature>
<feature type="helix" evidence="11">
    <location>
        <begin position="335"/>
        <end position="337"/>
    </location>
</feature>
<feature type="helix" evidence="11">
    <location>
        <begin position="338"/>
        <end position="347"/>
    </location>
</feature>
<feature type="helix" evidence="11">
    <location>
        <begin position="348"/>
        <end position="350"/>
    </location>
</feature>
<feature type="turn" evidence="11">
    <location>
        <begin position="354"/>
        <end position="356"/>
    </location>
</feature>
<feature type="helix" evidence="11">
    <location>
        <begin position="357"/>
        <end position="396"/>
    </location>
</feature>
<feature type="helix" evidence="11">
    <location>
        <begin position="409"/>
        <end position="423"/>
    </location>
</feature>
<feature type="helix" evidence="11">
    <location>
        <begin position="429"/>
        <end position="433"/>
    </location>
</feature>
<feature type="helix" evidence="11">
    <location>
        <begin position="434"/>
        <end position="442"/>
    </location>
</feature>
<feature type="helix" evidence="11">
    <location>
        <begin position="447"/>
        <end position="458"/>
    </location>
</feature>
<feature type="helix" evidence="11">
    <location>
        <begin position="468"/>
        <end position="471"/>
    </location>
</feature>
<reference key="1">
    <citation type="journal article" date="1994" name="J. Biochem.">
        <title>Isolation and analysis of cDNA encoding a precursor of Canavalia ensiformis asparaginyl endopeptidase (legumain).</title>
        <authorList>
            <person name="Takeda O."/>
            <person name="Miura Y."/>
            <person name="Mitta M."/>
            <person name="Matsushita H."/>
            <person name="Kato I."/>
            <person name="Abe Y."/>
            <person name="Yokosawa H."/>
            <person name="Ishii S."/>
        </authorList>
    </citation>
    <scope>NUCLEOTIDE SEQUENCE [MRNA]</scope>
    <source>
        <tissue>Seed</tissue>
    </source>
</reference>
<reference key="2">
    <citation type="journal article" date="1993" name="J. Biol. Chem.">
        <title>Asparaginyl endopeptidase of jack bean seeds. Purification, characterization, and high utility in protein sequence analysis.</title>
        <authorList>
            <person name="Abe Y."/>
            <person name="Shirane K."/>
            <person name="Yokosawa H."/>
            <person name="Matsushita H."/>
            <person name="Mitta M."/>
            <person name="Kato I."/>
            <person name="Ishii S."/>
        </authorList>
    </citation>
    <scope>PROTEIN SEQUENCE OF 36-60</scope>
    <scope>FUNCTION</scope>
    <scope>CATALYTIC ACTIVITY</scope>
    <scope>CHARACTERIZATION</scope>
    <scope>ACTIVITY REGULATION</scope>
    <scope>BIOPHYSICOCHEMICAL PROPERTIES</scope>
    <source>
        <tissue>Seed</tissue>
    </source>
</reference>
<reference key="3">
    <citation type="journal article" date="1994" name="Methods Enzymol.">
        <title>Legumain: asparaginyl endopeptidase.</title>
        <authorList>
            <person name="Ishii S."/>
        </authorList>
    </citation>
    <scope>REVIEW</scope>
</reference>
<reference key="4">
    <citation type="journal article" date="2021" name="Plant Cell">
        <title>Structural and biochemical analyses of concanavalin A circular permutation by jack bean asparaginyl endopeptidase.</title>
        <authorList>
            <person name="Nonis S.G."/>
            <person name="Haywood J."/>
            <person name="Schmidberger J.W."/>
            <person name="Mackie E.R.R."/>
            <person name="Soares da Costa T.P."/>
            <person name="Bond C.S."/>
            <person name="Mylne J.S."/>
        </authorList>
    </citation>
    <scope>X-RAY CRYSTALLOGRAPHY (2.69 ANGSTROMS) OF 36-475</scope>
    <scope>DISULFIDE BONDS</scope>
    <scope>FUNCTION</scope>
    <scope>SUBUNIT</scope>
</reference>
<organism>
    <name type="scientific">Canavalia ensiformis</name>
    <name type="common">Jack bean</name>
    <name type="synonym">Dolichos ensiformis</name>
    <dbReference type="NCBI Taxonomy" id="3823"/>
    <lineage>
        <taxon>Eukaryota</taxon>
        <taxon>Viridiplantae</taxon>
        <taxon>Streptophyta</taxon>
        <taxon>Embryophyta</taxon>
        <taxon>Tracheophyta</taxon>
        <taxon>Spermatophyta</taxon>
        <taxon>Magnoliopsida</taxon>
        <taxon>eudicotyledons</taxon>
        <taxon>Gunneridae</taxon>
        <taxon>Pentapetalae</taxon>
        <taxon>rosids</taxon>
        <taxon>fabids</taxon>
        <taxon>Fabales</taxon>
        <taxon>Fabaceae</taxon>
        <taxon>Papilionoideae</taxon>
        <taxon>50 kb inversion clade</taxon>
        <taxon>NPAAA clade</taxon>
        <taxon>indigoferoid/millettioid clade</taxon>
        <taxon>Phaseoleae</taxon>
        <taxon>Canavalia</taxon>
    </lineage>
</organism>
<name>LEGU_CANEN</name>
<gene>
    <name evidence="7" type="primary">AEP1</name>
</gene>
<accession>P49046</accession>
<evidence type="ECO:0000250" key="1">
    <source>
        <dbReference type="UniProtKB" id="O89017"/>
    </source>
</evidence>
<evidence type="ECO:0000250" key="2">
    <source>
        <dbReference type="UniProtKB" id="Q84LM2"/>
    </source>
</evidence>
<evidence type="ECO:0000255" key="3"/>
<evidence type="ECO:0000255" key="4">
    <source>
        <dbReference type="PROSITE-ProRule" id="PRU00498"/>
    </source>
</evidence>
<evidence type="ECO:0000269" key="5">
    <source>
    </source>
</evidence>
<evidence type="ECO:0000269" key="6">
    <source>
    </source>
</evidence>
<evidence type="ECO:0000303" key="7">
    <source>
    </source>
</evidence>
<evidence type="ECO:0000303" key="8">
    <source>
    </source>
</evidence>
<evidence type="ECO:0000305" key="9"/>
<evidence type="ECO:0007744" key="10">
    <source>
        <dbReference type="PDB" id="6XT5"/>
    </source>
</evidence>
<evidence type="ECO:0007829" key="11">
    <source>
        <dbReference type="PDB" id="6XT5"/>
    </source>
</evidence>
<protein>
    <recommendedName>
        <fullName evidence="8">Legumain</fullName>
        <ecNumber evidence="6">3.4.22.34</ecNumber>
    </recommendedName>
    <alternativeName>
        <fullName evidence="7">Asparaginyl endopeptidase 1</fullName>
        <shortName evidence="7">CeAEP1</shortName>
    </alternativeName>
</protein>
<proteinExistence type="evidence at protein level"/>
<dbReference type="EC" id="3.4.22.34" evidence="6"/>
<dbReference type="EMBL" id="D31787">
    <property type="protein sequence ID" value="BAA06596.1"/>
    <property type="molecule type" value="mRNA"/>
</dbReference>
<dbReference type="PIR" id="JX0344">
    <property type="entry name" value="JX0344"/>
</dbReference>
<dbReference type="PDB" id="6XT5">
    <property type="method" value="X-ray"/>
    <property type="resolution" value="2.69 A"/>
    <property type="chains" value="A/B=36-475"/>
</dbReference>
<dbReference type="PDBsum" id="6XT5"/>
<dbReference type="SMR" id="P49046"/>
<dbReference type="MEROPS" id="C13.001"/>
<dbReference type="GO" id="GO:0005773">
    <property type="term" value="C:vacuole"/>
    <property type="evidence" value="ECO:0007669"/>
    <property type="project" value="GOC"/>
</dbReference>
<dbReference type="GO" id="GO:0004197">
    <property type="term" value="F:cysteine-type endopeptidase activity"/>
    <property type="evidence" value="ECO:0007669"/>
    <property type="project" value="UniProtKB-EC"/>
</dbReference>
<dbReference type="GO" id="GO:0051603">
    <property type="term" value="P:proteolysis involved in protein catabolic process"/>
    <property type="evidence" value="ECO:0007669"/>
    <property type="project" value="InterPro"/>
</dbReference>
<dbReference type="GO" id="GO:0006624">
    <property type="term" value="P:vacuolar protein processing"/>
    <property type="evidence" value="ECO:0007669"/>
    <property type="project" value="TreeGrafter"/>
</dbReference>
<dbReference type="CDD" id="cd21115">
    <property type="entry name" value="legumain_C"/>
    <property type="match status" value="1"/>
</dbReference>
<dbReference type="FunFam" id="1.10.132.130:FF:000001">
    <property type="entry name" value="Vacuolar-processing enzyme beta-isozyme"/>
    <property type="match status" value="1"/>
</dbReference>
<dbReference type="FunFam" id="3.40.50.1460:FF:000005">
    <property type="entry name" value="Vacuolar-processing enzyme beta-isozyme"/>
    <property type="match status" value="1"/>
</dbReference>
<dbReference type="Gene3D" id="1.10.132.130">
    <property type="match status" value="1"/>
</dbReference>
<dbReference type="Gene3D" id="3.40.50.1460">
    <property type="match status" value="1"/>
</dbReference>
<dbReference type="InterPro" id="IPR043577">
    <property type="entry name" value="AE"/>
</dbReference>
<dbReference type="InterPro" id="IPR048501">
    <property type="entry name" value="Legum_prodom"/>
</dbReference>
<dbReference type="InterPro" id="IPR046427">
    <property type="entry name" value="Legumain_prodom_sf"/>
</dbReference>
<dbReference type="InterPro" id="IPR001096">
    <property type="entry name" value="Peptidase_C13"/>
</dbReference>
<dbReference type="PANTHER" id="PTHR12000">
    <property type="entry name" value="HEMOGLOBINASE FAMILY MEMBER"/>
    <property type="match status" value="1"/>
</dbReference>
<dbReference type="PANTHER" id="PTHR12000:SF42">
    <property type="entry name" value="LEGUMAIN"/>
    <property type="match status" value="1"/>
</dbReference>
<dbReference type="Pfam" id="PF20985">
    <property type="entry name" value="Legum_prodom"/>
    <property type="match status" value="1"/>
</dbReference>
<dbReference type="Pfam" id="PF01650">
    <property type="entry name" value="Peptidase_C13"/>
    <property type="match status" value="1"/>
</dbReference>
<dbReference type="PIRSF" id="PIRSF500139">
    <property type="entry name" value="AE"/>
    <property type="match status" value="1"/>
</dbReference>
<dbReference type="PIRSF" id="PIRSF019663">
    <property type="entry name" value="Legumain"/>
    <property type="match status" value="1"/>
</dbReference>
<dbReference type="PRINTS" id="PR00776">
    <property type="entry name" value="HEMOGLOBNASE"/>
</dbReference>